<protein>
    <recommendedName>
        <fullName evidence="1">Small ribosomal subunit protein uS3</fullName>
    </recommendedName>
    <alternativeName>
        <fullName evidence="2">30S ribosomal protein S3</fullName>
    </alternativeName>
</protein>
<keyword id="KW-0687">Ribonucleoprotein</keyword>
<keyword id="KW-0689">Ribosomal protein</keyword>
<keyword id="KW-0694">RNA-binding</keyword>
<keyword id="KW-0699">rRNA-binding</keyword>
<reference key="1">
    <citation type="journal article" date="1998" name="Int. J. Syst. Bacteriol.">
        <title>Classification of new phytoplasmas associated with diseases of strawberry in Florida, based on analysis of 16S rRNA and ribosomal protein gene operon sequences.</title>
        <authorList>
            <person name="Jomantiene R."/>
            <person name="Davis R.E."/>
            <person name="Maas J."/>
            <person name="Dally E.L."/>
        </authorList>
    </citation>
    <scope>NUCLEOTIDE SEQUENCE [GENOMIC DNA]</scope>
</reference>
<name>RS3_PHYS1</name>
<gene>
    <name evidence="1" type="primary">rpsC</name>
    <name evidence="1" type="synonym">rps3</name>
</gene>
<proteinExistence type="inferred from homology"/>
<sequence>MGQKINPNGLRLGIIRTWDSQWFVQDKEIPALIKEDYLIRELINNFSKKSAISQIEIQRLKEKTKNRIKIYIHTAKPGVIIGRDGDTRNKMVAKLKELTQKDVDLNILEVKNSEKIALLIAQNIAEQLENRMNFRHVQKMAIQKALKAGVKGIKTLVSGRLNGAEIARSEGNDEGRVPLHTLRADIDYASLQAYTTYGVLGVKVWIFHGEVLPGQTILDTRKPFVFTNNRNSKYPSRYFKGGPKNVNTKKN</sequence>
<dbReference type="EMBL" id="U96615">
    <property type="protein sequence ID" value="AAC13662.1"/>
    <property type="molecule type" value="Genomic_DNA"/>
</dbReference>
<dbReference type="SMR" id="O66095"/>
<dbReference type="GO" id="GO:0022627">
    <property type="term" value="C:cytosolic small ribosomal subunit"/>
    <property type="evidence" value="ECO:0007669"/>
    <property type="project" value="TreeGrafter"/>
</dbReference>
<dbReference type="GO" id="GO:0003729">
    <property type="term" value="F:mRNA binding"/>
    <property type="evidence" value="ECO:0007669"/>
    <property type="project" value="UniProtKB-UniRule"/>
</dbReference>
<dbReference type="GO" id="GO:0019843">
    <property type="term" value="F:rRNA binding"/>
    <property type="evidence" value="ECO:0007669"/>
    <property type="project" value="UniProtKB-UniRule"/>
</dbReference>
<dbReference type="GO" id="GO:0003735">
    <property type="term" value="F:structural constituent of ribosome"/>
    <property type="evidence" value="ECO:0007669"/>
    <property type="project" value="InterPro"/>
</dbReference>
<dbReference type="GO" id="GO:0006412">
    <property type="term" value="P:translation"/>
    <property type="evidence" value="ECO:0007669"/>
    <property type="project" value="UniProtKB-UniRule"/>
</dbReference>
<dbReference type="CDD" id="cd02412">
    <property type="entry name" value="KH-II_30S_S3"/>
    <property type="match status" value="1"/>
</dbReference>
<dbReference type="FunFam" id="3.30.300.20:FF:000001">
    <property type="entry name" value="30S ribosomal protein S3"/>
    <property type="match status" value="1"/>
</dbReference>
<dbReference type="Gene3D" id="3.30.300.20">
    <property type="match status" value="1"/>
</dbReference>
<dbReference type="Gene3D" id="3.30.1140.32">
    <property type="entry name" value="Ribosomal protein S3, C-terminal domain"/>
    <property type="match status" value="1"/>
</dbReference>
<dbReference type="HAMAP" id="MF_01309_B">
    <property type="entry name" value="Ribosomal_uS3_B"/>
    <property type="match status" value="1"/>
</dbReference>
<dbReference type="InterPro" id="IPR004087">
    <property type="entry name" value="KH_dom"/>
</dbReference>
<dbReference type="InterPro" id="IPR015946">
    <property type="entry name" value="KH_dom-like_a/b"/>
</dbReference>
<dbReference type="InterPro" id="IPR004044">
    <property type="entry name" value="KH_dom_type_2"/>
</dbReference>
<dbReference type="InterPro" id="IPR009019">
    <property type="entry name" value="KH_sf_prok-type"/>
</dbReference>
<dbReference type="InterPro" id="IPR036419">
    <property type="entry name" value="Ribosomal_S3_C_sf"/>
</dbReference>
<dbReference type="InterPro" id="IPR005704">
    <property type="entry name" value="Ribosomal_uS3_bac-typ"/>
</dbReference>
<dbReference type="InterPro" id="IPR001351">
    <property type="entry name" value="Ribosomal_uS3_C"/>
</dbReference>
<dbReference type="InterPro" id="IPR018280">
    <property type="entry name" value="Ribosomal_uS3_CS"/>
</dbReference>
<dbReference type="NCBIfam" id="TIGR01009">
    <property type="entry name" value="rpsC_bact"/>
    <property type="match status" value="1"/>
</dbReference>
<dbReference type="PANTHER" id="PTHR11760">
    <property type="entry name" value="30S/40S RIBOSOMAL PROTEIN S3"/>
    <property type="match status" value="1"/>
</dbReference>
<dbReference type="PANTHER" id="PTHR11760:SF19">
    <property type="entry name" value="SMALL RIBOSOMAL SUBUNIT PROTEIN US3C"/>
    <property type="match status" value="1"/>
</dbReference>
<dbReference type="Pfam" id="PF07650">
    <property type="entry name" value="KH_2"/>
    <property type="match status" value="1"/>
</dbReference>
<dbReference type="Pfam" id="PF00189">
    <property type="entry name" value="Ribosomal_S3_C"/>
    <property type="match status" value="1"/>
</dbReference>
<dbReference type="SMART" id="SM00322">
    <property type="entry name" value="KH"/>
    <property type="match status" value="1"/>
</dbReference>
<dbReference type="SUPFAM" id="SSF54814">
    <property type="entry name" value="Prokaryotic type KH domain (KH-domain type II)"/>
    <property type="match status" value="1"/>
</dbReference>
<dbReference type="SUPFAM" id="SSF54821">
    <property type="entry name" value="Ribosomal protein S3 C-terminal domain"/>
    <property type="match status" value="1"/>
</dbReference>
<dbReference type="PROSITE" id="PS50823">
    <property type="entry name" value="KH_TYPE_2"/>
    <property type="match status" value="1"/>
</dbReference>
<dbReference type="PROSITE" id="PS00548">
    <property type="entry name" value="RIBOSOMAL_S3"/>
    <property type="match status" value="1"/>
</dbReference>
<feature type="chain" id="PRO_0000130171" description="Small ribosomal subunit protein uS3">
    <location>
        <begin position="1"/>
        <end position="251"/>
    </location>
</feature>
<feature type="domain" description="KH type-2" evidence="1">
    <location>
        <begin position="39"/>
        <end position="111"/>
    </location>
</feature>
<evidence type="ECO:0000255" key="1">
    <source>
        <dbReference type="HAMAP-Rule" id="MF_01309"/>
    </source>
</evidence>
<evidence type="ECO:0000305" key="2"/>
<comment type="function">
    <text evidence="1">Binds the lower part of the 30S subunit head. Binds mRNA in the 70S ribosome, positioning it for translation.</text>
</comment>
<comment type="subunit">
    <text evidence="1">Part of the 30S ribosomal subunit. Forms a tight complex with proteins S10 and S14.</text>
</comment>
<comment type="similarity">
    <text evidence="1">Belongs to the universal ribosomal protein uS3 family.</text>
</comment>
<accession>O66095</accession>
<organism>
    <name type="scientific">Phytoplasma sp. (strain STRAWB1)</name>
    <dbReference type="NCBI Taxonomy" id="59889"/>
    <lineage>
        <taxon>Bacteria</taxon>
        <taxon>Bacillati</taxon>
        <taxon>Mycoplasmatota</taxon>
        <taxon>Mollicutes</taxon>
        <taxon>Acholeplasmatales</taxon>
        <taxon>Acholeplasmataceae</taxon>
        <taxon>Candidatus Phytoplasma</taxon>
    </lineage>
</organism>